<gene>
    <name evidence="6" type="primary">UgpQ</name>
    <name evidence="6" type="ordered locus">TTE0993</name>
</gene>
<name>GDPD_CALS4</name>
<feature type="chain" id="PRO_0000457998" description="Glycerophosphodiester phosphodiesterase">
    <location>
        <begin position="1"/>
        <end position="243"/>
    </location>
</feature>
<feature type="domain" description="GP-PDE" evidence="1">
    <location>
        <begin position="3"/>
        <end position="239"/>
    </location>
</feature>
<feature type="active site" description="Proton acceptor" evidence="5 7">
    <location>
        <position position="8"/>
    </location>
</feature>
<feature type="active site" description="Proton donor" evidence="5 7">
    <location>
        <position position="50"/>
    </location>
</feature>
<feature type="binding site" evidence="2 7">
    <location>
        <position position="35"/>
    </location>
    <ligand>
        <name>Ca(2+)</name>
        <dbReference type="ChEBI" id="CHEBI:29108"/>
    </ligand>
</feature>
<feature type="binding site" evidence="2 7">
    <location>
        <position position="37"/>
    </location>
    <ligand>
        <name>Ca(2+)</name>
        <dbReference type="ChEBI" id="CHEBI:29108"/>
    </ligand>
</feature>
<feature type="binding site" evidence="2 7">
    <location>
        <position position="110"/>
    </location>
    <ligand>
        <name>Ca(2+)</name>
        <dbReference type="ChEBI" id="CHEBI:29108"/>
    </ligand>
</feature>
<feature type="mutagenesis site" description="Retains 10.7% of activity." evidence="2">
    <original>R</original>
    <variation>A</variation>
    <location>
        <position position="9"/>
    </location>
</feature>
<feature type="mutagenesis site" description="Loss of activity." evidence="2">
    <original>E</original>
    <variation>A</variation>
    <location>
        <position position="35"/>
    </location>
</feature>
<feature type="mutagenesis site" description="Loss of activity." evidence="2">
    <original>D</original>
    <variation>A</variation>
    <location>
        <position position="37"/>
    </location>
</feature>
<feature type="mutagenesis site" description="Retains 1.39% of activity." evidence="2">
    <original>H</original>
    <variation>A</variation>
    <location>
        <position position="50"/>
    </location>
</feature>
<feature type="mutagenesis site" description="Loss of activity." evidence="2">
    <original>E</original>
    <variation>A</variation>
    <location>
        <position position="110"/>
    </location>
</feature>
<feature type="mutagenesis site" description="Retains 4.7% of activity." evidence="2">
    <original>K</original>
    <variation>A</variation>
    <location>
        <position position="112"/>
    </location>
</feature>
<feature type="strand" evidence="8">
    <location>
        <begin position="4"/>
        <end position="8"/>
    </location>
</feature>
<feature type="turn" evidence="8">
    <location>
        <begin position="9"/>
        <end position="14"/>
    </location>
</feature>
<feature type="helix" evidence="8">
    <location>
        <begin position="20"/>
        <end position="29"/>
    </location>
</feature>
<feature type="strand" evidence="8">
    <location>
        <begin position="32"/>
        <end position="40"/>
    </location>
</feature>
<feature type="strand" evidence="8">
    <location>
        <begin position="46"/>
        <end position="48"/>
    </location>
</feature>
<feature type="strand" evidence="8">
    <location>
        <begin position="50"/>
        <end position="54"/>
    </location>
</feature>
<feature type="turn" evidence="8">
    <location>
        <begin position="55"/>
        <end position="57"/>
    </location>
</feature>
<feature type="helix" evidence="8">
    <location>
        <begin position="64"/>
        <end position="66"/>
    </location>
</feature>
<feature type="helix" evidence="8">
    <location>
        <begin position="69"/>
        <end position="72"/>
    </location>
</feature>
<feature type="turn" evidence="8">
    <location>
        <begin position="79"/>
        <end position="81"/>
    </location>
</feature>
<feature type="helix" evidence="8">
    <location>
        <begin position="83"/>
        <end position="85"/>
    </location>
</feature>
<feature type="helix" evidence="8">
    <location>
        <begin position="93"/>
        <end position="100"/>
    </location>
</feature>
<feature type="strand" evidence="8">
    <location>
        <begin position="106"/>
        <end position="111"/>
    </location>
</feature>
<feature type="helix" evidence="8">
    <location>
        <begin position="121"/>
        <end position="131"/>
    </location>
</feature>
<feature type="turn" evidence="8">
    <location>
        <begin position="135"/>
        <end position="137"/>
    </location>
</feature>
<feature type="strand" evidence="8">
    <location>
        <begin position="138"/>
        <end position="144"/>
    </location>
</feature>
<feature type="helix" evidence="8">
    <location>
        <begin position="145"/>
        <end position="154"/>
    </location>
</feature>
<feature type="strand" evidence="8">
    <location>
        <begin position="158"/>
        <end position="164"/>
    </location>
</feature>
<feature type="helix" evidence="8">
    <location>
        <begin position="172"/>
        <end position="177"/>
    </location>
</feature>
<feature type="strand" evidence="8">
    <location>
        <begin position="181"/>
        <end position="186"/>
    </location>
</feature>
<feature type="helix" evidence="8">
    <location>
        <begin position="187"/>
        <end position="189"/>
    </location>
</feature>
<feature type="helix" evidence="8">
    <location>
        <begin position="192"/>
        <end position="200"/>
    </location>
</feature>
<feature type="helix" evidence="8">
    <location>
        <begin position="213"/>
        <end position="222"/>
    </location>
</feature>
<feature type="strand" evidence="8">
    <location>
        <begin position="225"/>
        <end position="230"/>
    </location>
</feature>
<feature type="helix" evidence="8">
    <location>
        <begin position="232"/>
        <end position="239"/>
    </location>
</feature>
<comment type="function">
    <text evidence="2">Glycerophosphodiester phosphodiesterase hydrolyzes glycerophosphodiesters into glycerol-3-phosphate (G3P) and the corresponding alcohol (PubMed:18214974). Can use glycerophosphocholine (PubMed:18214974).</text>
</comment>
<comment type="catalytic activity">
    <reaction evidence="2">
        <text>a sn-glycero-3-phosphodiester + H2O = an alcohol + sn-glycerol 3-phosphate + H(+)</text>
        <dbReference type="Rhea" id="RHEA:12969"/>
        <dbReference type="ChEBI" id="CHEBI:15377"/>
        <dbReference type="ChEBI" id="CHEBI:15378"/>
        <dbReference type="ChEBI" id="CHEBI:30879"/>
        <dbReference type="ChEBI" id="CHEBI:57597"/>
        <dbReference type="ChEBI" id="CHEBI:83408"/>
        <dbReference type="EC" id="3.1.4.46"/>
    </reaction>
</comment>
<comment type="catalytic activity">
    <reaction evidence="2">
        <text>sn-glycerol 3-phosphocholine + H2O = sn-glycerol 3-phosphate + choline + H(+)</text>
        <dbReference type="Rhea" id="RHEA:16061"/>
        <dbReference type="ChEBI" id="CHEBI:15354"/>
        <dbReference type="ChEBI" id="CHEBI:15377"/>
        <dbReference type="ChEBI" id="CHEBI:15378"/>
        <dbReference type="ChEBI" id="CHEBI:16870"/>
        <dbReference type="ChEBI" id="CHEBI:57597"/>
    </reaction>
</comment>
<comment type="cofactor">
    <cofactor evidence="2">
        <name>Mg(2+)</name>
        <dbReference type="ChEBI" id="CHEBI:18420"/>
    </cofactor>
    <cofactor evidence="2">
        <name>Ca(2+)</name>
        <dbReference type="ChEBI" id="CHEBI:29108"/>
    </cofactor>
    <text evidence="2">Activity is higher with Mg(2+).</text>
</comment>
<comment type="activity regulation">
    <text evidence="2">Inhibited by EDTA.</text>
</comment>
<comment type="subunit">
    <text evidence="2">Homodimer.</text>
</comment>
<comment type="similarity">
    <text evidence="4">Belongs to the glycerophosphoryl diester phosphodiesterase family.</text>
</comment>
<proteinExistence type="evidence at protein level"/>
<organism>
    <name type="scientific">Caldanaerobacter subterraneus subsp. tengcongensis (strain DSM 15242 / JCM 11007 / NBRC 100824 / MB4)</name>
    <name type="common">Thermoanaerobacter tengcongensis</name>
    <dbReference type="NCBI Taxonomy" id="273068"/>
    <lineage>
        <taxon>Bacteria</taxon>
        <taxon>Bacillati</taxon>
        <taxon>Bacillota</taxon>
        <taxon>Clostridia</taxon>
        <taxon>Thermoanaerobacterales</taxon>
        <taxon>Thermoanaerobacteraceae</taxon>
        <taxon>Caldanaerobacter</taxon>
    </lineage>
</organism>
<reference key="1">
    <citation type="journal article" date="2002" name="Genome Res.">
        <title>A complete sequence of the T. tengcongensis genome.</title>
        <authorList>
            <person name="Bao Q."/>
            <person name="Tian Y."/>
            <person name="Li W."/>
            <person name="Xu Z."/>
            <person name="Xuan Z."/>
            <person name="Hu S."/>
            <person name="Dong W."/>
            <person name="Yang J."/>
            <person name="Chen Y."/>
            <person name="Xue Y."/>
            <person name="Xu Y."/>
            <person name="Lai X."/>
            <person name="Huang L."/>
            <person name="Dong X."/>
            <person name="Ma Y."/>
            <person name="Ling L."/>
            <person name="Tan H."/>
            <person name="Chen R."/>
            <person name="Wang J."/>
            <person name="Yu J."/>
            <person name="Yang H."/>
        </authorList>
    </citation>
    <scope>NUCLEOTIDE SEQUENCE [LARGE SCALE GENOMIC DNA]</scope>
    <source>
        <strain>DSM 15242 / JCM 11007 / NBRC 100824 / MB4</strain>
    </source>
</reference>
<reference evidence="7" key="2">
    <citation type="journal article" date="2008" name="Proteins">
        <title>Crystal structure of glycerophosphodiester phosphodiesterase (GDPD) from Thermoanaerobacter tengcongensis, a metal ion-dependent enzyme: insight into the catalytic mechanism.</title>
        <authorList>
            <person name="Shi L."/>
            <person name="Liu J.F."/>
            <person name="An X.M."/>
            <person name="Liang D.C."/>
        </authorList>
    </citation>
    <scope>X-RAY CRYSTALLOGRAPHY (1.91 ANGSTROMS) IN COMPLEX WITH CALCIUM IONS</scope>
    <scope>FUNCTION</scope>
    <scope>CATALYTIC ACTIVITY</scope>
    <scope>COFACTOR</scope>
    <scope>ACTIVITY REGULATION</scope>
    <scope>SUBUNIT</scope>
    <scope>ACTIVE SITE</scope>
    <scope>MUTAGENESIS OF ARG-9; GLU-35; ASP-37; HIS-50; GLU-110 AND LYS-112</scope>
</reference>
<evidence type="ECO:0000255" key="1">
    <source>
        <dbReference type="PROSITE-ProRule" id="PRU01041"/>
    </source>
</evidence>
<evidence type="ECO:0000269" key="2">
    <source>
    </source>
</evidence>
<evidence type="ECO:0000303" key="3">
    <source>
    </source>
</evidence>
<evidence type="ECO:0000305" key="4"/>
<evidence type="ECO:0000305" key="5">
    <source>
    </source>
</evidence>
<evidence type="ECO:0000312" key="6">
    <source>
        <dbReference type="EMBL" id="AAM24248.1"/>
    </source>
</evidence>
<evidence type="ECO:0007744" key="7">
    <source>
        <dbReference type="PDB" id="2PZ0"/>
    </source>
</evidence>
<evidence type="ECO:0007829" key="8">
    <source>
        <dbReference type="PDB" id="2PZ0"/>
    </source>
</evidence>
<dbReference type="EC" id="3.1.4.46" evidence="2"/>
<dbReference type="EMBL" id="AE008691">
    <property type="protein sequence ID" value="AAM24248.1"/>
    <property type="molecule type" value="Genomic_DNA"/>
</dbReference>
<dbReference type="RefSeq" id="WP_009610981.1">
    <property type="nucleotide sequence ID" value="NC_003869.1"/>
</dbReference>
<dbReference type="PDB" id="2PZ0">
    <property type="method" value="X-ray"/>
    <property type="resolution" value="1.91 A"/>
    <property type="chains" value="A/B=1-243"/>
</dbReference>
<dbReference type="PDBsum" id="2PZ0"/>
<dbReference type="SMR" id="Q8RB32"/>
<dbReference type="STRING" id="273068.TTE0993"/>
<dbReference type="KEGG" id="tte:TTE0993"/>
<dbReference type="eggNOG" id="COG0584">
    <property type="taxonomic scope" value="Bacteria"/>
</dbReference>
<dbReference type="HOGENOM" id="CLU_030006_3_5_9"/>
<dbReference type="OrthoDB" id="384721at2"/>
<dbReference type="BRENDA" id="3.1.4.46">
    <property type="organism ID" value="6784"/>
</dbReference>
<dbReference type="EvolutionaryTrace" id="Q8RB32"/>
<dbReference type="Proteomes" id="UP000000555">
    <property type="component" value="Chromosome"/>
</dbReference>
<dbReference type="GO" id="GO:0046872">
    <property type="term" value="F:metal ion binding"/>
    <property type="evidence" value="ECO:0007669"/>
    <property type="project" value="UniProtKB-KW"/>
</dbReference>
<dbReference type="GO" id="GO:0008081">
    <property type="term" value="F:phosphoric diester hydrolase activity"/>
    <property type="evidence" value="ECO:0007669"/>
    <property type="project" value="InterPro"/>
</dbReference>
<dbReference type="GO" id="GO:0006629">
    <property type="term" value="P:lipid metabolic process"/>
    <property type="evidence" value="ECO:0007669"/>
    <property type="project" value="InterPro"/>
</dbReference>
<dbReference type="CDD" id="cd08563">
    <property type="entry name" value="GDPD_TtGDE_like"/>
    <property type="match status" value="1"/>
</dbReference>
<dbReference type="Gene3D" id="3.20.20.190">
    <property type="entry name" value="Phosphatidylinositol (PI) phosphodiesterase"/>
    <property type="match status" value="1"/>
</dbReference>
<dbReference type="InterPro" id="IPR030395">
    <property type="entry name" value="GP_PDE_dom"/>
</dbReference>
<dbReference type="InterPro" id="IPR017946">
    <property type="entry name" value="PLC-like_Pdiesterase_TIM-brl"/>
</dbReference>
<dbReference type="PANTHER" id="PTHR46211:SF1">
    <property type="entry name" value="GLYCEROPHOSPHODIESTER PHOSPHODIESTERASE, CYTOPLASMIC"/>
    <property type="match status" value="1"/>
</dbReference>
<dbReference type="PANTHER" id="PTHR46211">
    <property type="entry name" value="GLYCEROPHOSPHORYL DIESTER PHOSPHODIESTERASE"/>
    <property type="match status" value="1"/>
</dbReference>
<dbReference type="Pfam" id="PF03009">
    <property type="entry name" value="GDPD"/>
    <property type="match status" value="1"/>
</dbReference>
<dbReference type="SUPFAM" id="SSF51695">
    <property type="entry name" value="PLC-like phosphodiesterases"/>
    <property type="match status" value="1"/>
</dbReference>
<dbReference type="PROSITE" id="PS51704">
    <property type="entry name" value="GP_PDE"/>
    <property type="match status" value="1"/>
</dbReference>
<keyword id="KW-0002">3D-structure</keyword>
<keyword id="KW-0106">Calcium</keyword>
<keyword id="KW-0378">Hydrolase</keyword>
<keyword id="KW-0460">Magnesium</keyword>
<keyword id="KW-0479">Metal-binding</keyword>
<keyword id="KW-1185">Reference proteome</keyword>
<sequence length="243" mass="27609">MKTLVIAHRGDSKNVPENTIAAFKRAMELGADGIELDVQLTKDGHLVVIHDETVDRTTNGEGFVKDFTLEEIKKLDAGIKFGEKFAGERIPTLYEVFELIGDKDFLVNIEIKSGIVLYPGIEEKLIKAIKEYNFEERVIISSFNHYSLRDVKKMAPHLKIGLLYQCGLVEPWHMALRMEAYSLHPFYFNIIPELVEGCKKNGVKLFPWTVDRKEDMERMIKAGVDGIITDDPETLINLVRKGG</sequence>
<protein>
    <recommendedName>
        <fullName evidence="3">Glycerophosphodiester phosphodiesterase</fullName>
        <shortName evidence="3">GDPD</shortName>
        <ecNumber evidence="2">3.1.4.46</ecNumber>
    </recommendedName>
    <alternativeName>
        <fullName evidence="3">ttGDPD</fullName>
    </alternativeName>
</protein>
<accession>Q8RB32</accession>